<protein>
    <recommendedName>
        <fullName evidence="1">Neuraminidase</fullName>
        <ecNumber evidence="1">3.2.1.18</ecNumber>
    </recommendedName>
</protein>
<evidence type="ECO:0000255" key="1">
    <source>
        <dbReference type="HAMAP-Rule" id="MF_04071"/>
    </source>
</evidence>
<feature type="chain" id="PRO_0000078728" description="Neuraminidase">
    <location>
        <begin position="1"/>
        <end position="469"/>
    </location>
</feature>
<feature type="topological domain" description="Intravirion" evidence="1">
    <location>
        <begin position="1"/>
        <end position="9"/>
    </location>
</feature>
<feature type="transmembrane region" description="Helical" evidence="1">
    <location>
        <begin position="10"/>
        <end position="30"/>
    </location>
</feature>
<feature type="topological domain" description="Virion surface" evidence="1">
    <location>
        <begin position="31"/>
        <end position="469"/>
    </location>
</feature>
<feature type="region of interest" description="Involved in apical transport and lipid raft association" evidence="1">
    <location>
        <begin position="11"/>
        <end position="33"/>
    </location>
</feature>
<feature type="region of interest" description="Hypervariable stalk region" evidence="1">
    <location>
        <begin position="36"/>
        <end position="88"/>
    </location>
</feature>
<feature type="region of interest" description="Head of neuraminidase" evidence="1">
    <location>
        <begin position="91"/>
        <end position="469"/>
    </location>
</feature>
<feature type="active site" description="Proton donor/acceptor" evidence="1">
    <location>
        <position position="151"/>
    </location>
</feature>
<feature type="active site" description="Nucleophile" evidence="1">
    <location>
        <position position="406"/>
    </location>
</feature>
<feature type="binding site" evidence="1">
    <location>
        <position position="118"/>
    </location>
    <ligand>
        <name>substrate</name>
    </ligand>
</feature>
<feature type="binding site" evidence="1">
    <location>
        <position position="152"/>
    </location>
    <ligand>
        <name>substrate</name>
    </ligand>
</feature>
<feature type="binding site" evidence="1">
    <location>
        <begin position="276"/>
        <end position="277"/>
    </location>
    <ligand>
        <name>substrate</name>
    </ligand>
</feature>
<feature type="binding site" evidence="1">
    <location>
        <position position="292"/>
    </location>
    <ligand>
        <name>substrate</name>
    </ligand>
</feature>
<feature type="binding site" evidence="1">
    <location>
        <position position="293"/>
    </location>
    <ligand>
        <name>Ca(2+)</name>
        <dbReference type="ChEBI" id="CHEBI:29108"/>
    </ligand>
</feature>
<feature type="binding site" evidence="1">
    <location>
        <position position="297"/>
    </location>
    <ligand>
        <name>Ca(2+)</name>
        <dbReference type="ChEBI" id="CHEBI:29108"/>
    </ligand>
</feature>
<feature type="binding site" evidence="1">
    <location>
        <position position="324"/>
    </location>
    <ligand>
        <name>Ca(2+)</name>
        <dbReference type="ChEBI" id="CHEBI:29108"/>
    </ligand>
</feature>
<feature type="binding site" evidence="1">
    <location>
        <position position="371"/>
    </location>
    <ligand>
        <name>substrate</name>
    </ligand>
</feature>
<feature type="glycosylation site" description="N-linked (GlcNAc...) asparagine; by host" evidence="1">
    <location>
        <position position="61"/>
    </location>
</feature>
<feature type="glycosylation site" description="N-linked (GlcNAc...) asparagine; by host" evidence="1">
    <location>
        <position position="70"/>
    </location>
</feature>
<feature type="glycosylation site" description="N-linked (GlcNAc...) asparagine; by host" evidence="1">
    <location>
        <position position="86"/>
    </location>
</feature>
<feature type="glycosylation site" description="N-linked (GlcNAc...) asparagine; by host" evidence="1">
    <location>
        <position position="146"/>
    </location>
</feature>
<feature type="glycosylation site" description="N-linked (GlcNAc...) asparagine; by host" evidence="1">
    <location>
        <position position="200"/>
    </location>
</feature>
<feature type="glycosylation site" description="N-linked (GlcNAc...) asparagine; by host" evidence="1">
    <location>
        <position position="234"/>
    </location>
</feature>
<feature type="disulfide bond" evidence="1">
    <location>
        <begin position="92"/>
        <end position="417"/>
    </location>
</feature>
<feature type="disulfide bond" evidence="1">
    <location>
        <begin position="124"/>
        <end position="129"/>
    </location>
</feature>
<feature type="disulfide bond" evidence="1">
    <location>
        <begin position="183"/>
        <end position="230"/>
    </location>
</feature>
<feature type="disulfide bond" evidence="1">
    <location>
        <begin position="232"/>
        <end position="237"/>
    </location>
</feature>
<feature type="disulfide bond" evidence="1">
    <location>
        <begin position="278"/>
        <end position="291"/>
    </location>
</feature>
<feature type="disulfide bond" evidence="1">
    <location>
        <begin position="280"/>
        <end position="289"/>
    </location>
</feature>
<feature type="disulfide bond" evidence="1">
    <location>
        <begin position="318"/>
        <end position="337"/>
    </location>
</feature>
<feature type="disulfide bond" evidence="1">
    <location>
        <begin position="421"/>
        <end position="447"/>
    </location>
</feature>
<name>NRAM_I76AB</name>
<proteinExistence type="inferred from homology"/>
<reference key="1">
    <citation type="journal article" date="1991" name="J. Gen. Virol.">
        <title>Evolutionary pathways of N2 neuraminidases of swine and human influenza A viruses: origin of the neuraminidase genes of two reassortants (H1N2) isolated from pigs.</title>
        <authorList>
            <person name="Nerome K."/>
            <person name="Kanegae Y."/>
            <person name="Yoshioka Y."/>
            <person name="Itamura S."/>
            <person name="Ishida M."/>
            <person name="Gojobori T."/>
            <person name="Oya A."/>
        </authorList>
    </citation>
    <scope>NUCLEOTIDE SEQUENCE [GENOMIC RNA]</scope>
</reference>
<reference key="2">
    <citation type="journal article" date="1995" name="J. Gen. Virol.">
        <title>Genetic analysis of porcine H3N2 viruses originating in Southern China.</title>
        <authorList>
            <person name="Nerome K."/>
            <person name="Kanegae Y."/>
            <person name="Shortridge K.F."/>
            <person name="Sugita S."/>
            <person name="Ishida M."/>
        </authorList>
    </citation>
    <scope>NUCLEOTIDE SEQUENCE [GENOMIC RNA] OF 24-469</scope>
</reference>
<reference key="3">
    <citation type="journal article" date="2004" name="Virus Res.">
        <title>Assembly and budding of influenza virus.</title>
        <authorList>
            <person name="Nayak D.P."/>
            <person name="Hui E.K."/>
            <person name="Barman S."/>
        </authorList>
    </citation>
    <scope>REVIEW</scope>
</reference>
<reference key="4">
    <citation type="journal article" date="2005" name="N. Engl. J. Med.">
        <title>Neuraminidase inhibitors for influenza.</title>
        <authorList>
            <person name="Moscona A."/>
        </authorList>
    </citation>
    <scope>REVIEW</scope>
</reference>
<reference key="5">
    <citation type="journal article" date="2005" name="Biol. Pharm. Bull.">
        <title>Sialobiology of influenza: molecular mechanism of host range variation of influenza viruses.</title>
        <authorList>
            <person name="Suzuki Y."/>
        </authorList>
    </citation>
    <scope>REVIEW</scope>
</reference>
<accession>Q09105</accession>
<accession>Q67338</accession>
<organismHost>
    <name type="scientific">Aves</name>
    <dbReference type="NCBI Taxonomy" id="8782"/>
</organismHost>
<organismHost>
    <name type="scientific">Cetacea</name>
    <name type="common">whales</name>
    <dbReference type="NCBI Taxonomy" id="9721"/>
</organismHost>
<organismHost>
    <name type="scientific">Homo sapiens</name>
    <name type="common">Human</name>
    <dbReference type="NCBI Taxonomy" id="9606"/>
</organismHost>
<organismHost>
    <name type="scientific">Phocidae</name>
    <name type="common">true seals</name>
    <dbReference type="NCBI Taxonomy" id="9709"/>
</organismHost>
<organismHost>
    <name type="scientific">Sus scrofa</name>
    <name type="common">Pig</name>
    <dbReference type="NCBI Taxonomy" id="9823"/>
</organismHost>
<gene>
    <name evidence="1" type="primary">NA</name>
</gene>
<keyword id="KW-0106">Calcium</keyword>
<keyword id="KW-1015">Disulfide bond</keyword>
<keyword id="KW-0325">Glycoprotein</keyword>
<keyword id="KW-0326">Glycosidase</keyword>
<keyword id="KW-1032">Host cell membrane</keyword>
<keyword id="KW-1043">Host membrane</keyword>
<keyword id="KW-0378">Hydrolase</keyword>
<keyword id="KW-0472">Membrane</keyword>
<keyword id="KW-0479">Metal-binding</keyword>
<keyword id="KW-0735">Signal-anchor</keyword>
<keyword id="KW-0812">Transmembrane</keyword>
<keyword id="KW-1133">Transmembrane helix</keyword>
<keyword id="KW-0946">Virion</keyword>
<sequence length="469" mass="52108">MNPNQKIITIGSVSLTIATICFLMQIAILVTTVTLHFKQYECDSPANNQVMPCEPIIIERNITEIVYLTNTTIEKEICPKLVEYRNWSKPQCKITGFAPFSKDNSIRLSAGGDIWVTREPYVSCDPGKCYQFALGQGTTLDNKHSNDTIHDRTPHRTLLMNELGVPFHLGTRQVCIAWSSSSCHDGKAWLHVCVTGYDKNATASFIYDGRLVDSIGSWSQNILRTQESECVCINGTCTVVMTDGSASGRADTKILFIEEGKIVHTSPLSGSAQHVEECSCYPRYPGVRCICRDNWKGSNRPVVDINVKDYSIDSSYVCSGLVGDTPRKNDRSSSSYCRNPNNEKGTHGVKGWAFDDGNDVWMGRTISEDSRSGYETFKVIGGWSTPNSKLQINRQVIVDSNDRSGYSGIFSVEGKSCINRCFYVELIRGREQETRVWWTSNSIVVFCGTSGTYGTGSWPDGADINLMPI</sequence>
<comment type="function">
    <text evidence="1">Catalyzes the removal of terminal sialic acid residues from viral and cellular glycoconjugates. Cleaves off the terminal sialic acids on the glycosylated HA during virus budding to facilitate virus release. Additionally helps virus spread through the circulation by further removing sialic acids from the cell surface. These cleavages prevent self-aggregation and ensure the efficient spread of the progeny virus from cell to cell. Otherwise, infection would be limited to one round of replication. Described as a receptor-destroying enzyme because it cleaves a terminal sialic acid from the cellular receptors. May facilitate viral invasion of the upper airways by cleaving the sialic acid moieties on the mucin of the airway epithelial cells. Likely to plays a role in the budding process through its association with lipid rafts during intracellular transport. May additionally display a raft-association independent effect on budding. Plays a role in the determination of host range restriction on replication and virulence. Sialidase activity in late endosome/lysosome traffic seems to enhance virus replication.</text>
</comment>
<comment type="catalytic activity">
    <reaction evidence="1">
        <text>Hydrolysis of alpha-(2-&gt;3)-, alpha-(2-&gt;6)-, alpha-(2-&gt;8)- glycosidic linkages of terminal sialic acid residues in oligosaccharides, glycoproteins, glycolipids, colominic acid and synthetic substrates.</text>
        <dbReference type="EC" id="3.2.1.18"/>
    </reaction>
</comment>
<comment type="cofactor">
    <cofactor evidence="1">
        <name>Ca(2+)</name>
        <dbReference type="ChEBI" id="CHEBI:29108"/>
    </cofactor>
</comment>
<comment type="activity regulation">
    <text evidence="1">Inhibited by the neuraminidase inhibitors zanamivir (Relenza) and oseltamivir (Tamiflu). These drugs interfere with the release of progeny virus from infected cells and are effective against all influenza strains. Resistance to neuraminidase inhibitors is quite rare.</text>
</comment>
<comment type="subunit">
    <text evidence="1">Homotetramer.</text>
</comment>
<comment type="subcellular location">
    <subcellularLocation>
        <location evidence="1">Virion membrane</location>
    </subcellularLocation>
    <subcellularLocation>
        <location evidence="1">Host apical cell membrane</location>
        <topology evidence="1">Single-pass type II membrane protein</topology>
    </subcellularLocation>
    <text evidence="1">Preferentially accumulates at the apical plasma membrane in infected polarized epithelial cells, which is the virus assembly site. Uses lipid rafts for cell surface transport and apical sorting. In the virion, forms a mushroom-shaped spike on the surface of the membrane.</text>
</comment>
<comment type="domain">
    <text evidence="1">Intact N-terminus is essential for virion morphogenesis. Possesses two apical sorting signals, one in the ectodomain, which is likely to be a glycan, and the other in the transmembrane domain. The transmembrane domain also plays a role in lipid raft association.</text>
</comment>
<comment type="PTM">
    <text evidence="1">N-glycosylated.</text>
</comment>
<comment type="miscellaneous">
    <text>The influenza A genome consist of 8 RNA segments. Genetic variation of hemagglutinin and/or neuraminidase genes results in the emergence of new influenza strains. The mechanism of variation can be the result of point mutations or the result of genetic reassortment between segments of two different strains.</text>
</comment>
<comment type="similarity">
    <text evidence="1">Belongs to the glycosyl hydrolase 34 family.</text>
</comment>
<dbReference type="EC" id="3.2.1.18" evidence="1"/>
<dbReference type="EMBL" id="D00716">
    <property type="protein sequence ID" value="BAA00621.1"/>
    <property type="molecule type" value="Genomic_RNA"/>
</dbReference>
<dbReference type="EMBL" id="D21189">
    <property type="protein sequence ID" value="BAA04725.1"/>
    <property type="molecule type" value="Genomic_RNA"/>
</dbReference>
<dbReference type="SMR" id="Q09105"/>
<dbReference type="CAZy" id="GH34">
    <property type="family name" value="Glycoside Hydrolase Family 34"/>
</dbReference>
<dbReference type="GlyCosmos" id="Q09105">
    <property type="glycosylation" value="6 sites, No reported glycans"/>
</dbReference>
<dbReference type="GO" id="GO:0020002">
    <property type="term" value="C:host cell plasma membrane"/>
    <property type="evidence" value="ECO:0007669"/>
    <property type="project" value="UniProtKB-SubCell"/>
</dbReference>
<dbReference type="GO" id="GO:0016020">
    <property type="term" value="C:membrane"/>
    <property type="evidence" value="ECO:0007669"/>
    <property type="project" value="UniProtKB-UniRule"/>
</dbReference>
<dbReference type="GO" id="GO:0055036">
    <property type="term" value="C:virion membrane"/>
    <property type="evidence" value="ECO:0007669"/>
    <property type="project" value="UniProtKB-SubCell"/>
</dbReference>
<dbReference type="GO" id="GO:0004308">
    <property type="term" value="F:exo-alpha-sialidase activity"/>
    <property type="evidence" value="ECO:0007669"/>
    <property type="project" value="UniProtKB-UniRule"/>
</dbReference>
<dbReference type="GO" id="GO:0046872">
    <property type="term" value="F:metal ion binding"/>
    <property type="evidence" value="ECO:0007669"/>
    <property type="project" value="UniProtKB-UniRule"/>
</dbReference>
<dbReference type="GO" id="GO:0005975">
    <property type="term" value="P:carbohydrate metabolic process"/>
    <property type="evidence" value="ECO:0007669"/>
    <property type="project" value="InterPro"/>
</dbReference>
<dbReference type="GO" id="GO:0046761">
    <property type="term" value="P:viral budding from plasma membrane"/>
    <property type="evidence" value="ECO:0007669"/>
    <property type="project" value="UniProtKB-UniRule"/>
</dbReference>
<dbReference type="CDD" id="cd15483">
    <property type="entry name" value="Influenza_NA"/>
    <property type="match status" value="1"/>
</dbReference>
<dbReference type="Gene3D" id="2.120.10.10">
    <property type="match status" value="1"/>
</dbReference>
<dbReference type="HAMAP" id="MF_04071">
    <property type="entry name" value="INFV_NRAM"/>
    <property type="match status" value="1"/>
</dbReference>
<dbReference type="InterPro" id="IPR001860">
    <property type="entry name" value="Glyco_hydro_34"/>
</dbReference>
<dbReference type="InterPro" id="IPR033654">
    <property type="entry name" value="Sialidase_Influenza_A/B"/>
</dbReference>
<dbReference type="InterPro" id="IPR036278">
    <property type="entry name" value="Sialidase_sf"/>
</dbReference>
<dbReference type="Pfam" id="PF00064">
    <property type="entry name" value="Neur"/>
    <property type="match status" value="1"/>
</dbReference>
<dbReference type="SUPFAM" id="SSF50939">
    <property type="entry name" value="Sialidases"/>
    <property type="match status" value="1"/>
</dbReference>
<organism>
    <name type="scientific">Influenza A virus (strain A/Swine/Hong Kong/4/1976 H3N2)</name>
    <dbReference type="NCBI Taxonomy" id="380217"/>
    <lineage>
        <taxon>Viruses</taxon>
        <taxon>Riboviria</taxon>
        <taxon>Orthornavirae</taxon>
        <taxon>Negarnaviricota</taxon>
        <taxon>Polyploviricotina</taxon>
        <taxon>Insthoviricetes</taxon>
        <taxon>Articulavirales</taxon>
        <taxon>Orthomyxoviridae</taxon>
        <taxon>Alphainfluenzavirus</taxon>
        <taxon>Alphainfluenzavirus influenzae</taxon>
        <taxon>Influenza A virus</taxon>
    </lineage>
</organism>